<proteinExistence type="inferred from homology"/>
<organism>
    <name type="scientific">Brachyspira hyodysenteriae (strain ATCC 49526 / WA1)</name>
    <dbReference type="NCBI Taxonomy" id="565034"/>
    <lineage>
        <taxon>Bacteria</taxon>
        <taxon>Pseudomonadati</taxon>
        <taxon>Spirochaetota</taxon>
        <taxon>Spirochaetia</taxon>
        <taxon>Brachyspirales</taxon>
        <taxon>Brachyspiraceae</taxon>
        <taxon>Brachyspira</taxon>
    </lineage>
</organism>
<evidence type="ECO:0000255" key="1">
    <source>
        <dbReference type="HAMAP-Rule" id="MF_00008"/>
    </source>
</evidence>
<feature type="chain" id="PRO_1000197233" description="Thymidylate synthase">
    <location>
        <begin position="1"/>
        <end position="266"/>
    </location>
</feature>
<feature type="active site" description="Nucleophile" evidence="1">
    <location>
        <position position="147"/>
    </location>
</feature>
<feature type="binding site" description="in other chain" evidence="1">
    <location>
        <position position="21"/>
    </location>
    <ligand>
        <name>dUMP</name>
        <dbReference type="ChEBI" id="CHEBI:246422"/>
        <note>ligand shared between dimeric partners</note>
    </ligand>
</feature>
<feature type="binding site" evidence="1">
    <location>
        <begin position="127"/>
        <end position="128"/>
    </location>
    <ligand>
        <name>dUMP</name>
        <dbReference type="ChEBI" id="CHEBI:246422"/>
        <note>ligand shared between dimeric partners</note>
    </ligand>
</feature>
<feature type="binding site" description="in other chain" evidence="1">
    <location>
        <begin position="168"/>
        <end position="171"/>
    </location>
    <ligand>
        <name>dUMP</name>
        <dbReference type="ChEBI" id="CHEBI:246422"/>
        <note>ligand shared between dimeric partners</note>
    </ligand>
</feature>
<feature type="binding site" evidence="1">
    <location>
        <position position="171"/>
    </location>
    <ligand>
        <name>(6R)-5,10-methylene-5,6,7,8-tetrahydrofolate</name>
        <dbReference type="ChEBI" id="CHEBI:15636"/>
    </ligand>
</feature>
<feature type="binding site" description="in other chain" evidence="1">
    <location>
        <position position="179"/>
    </location>
    <ligand>
        <name>dUMP</name>
        <dbReference type="ChEBI" id="CHEBI:246422"/>
        <note>ligand shared between dimeric partners</note>
    </ligand>
</feature>
<feature type="binding site" description="in other chain" evidence="1">
    <location>
        <begin position="209"/>
        <end position="211"/>
    </location>
    <ligand>
        <name>dUMP</name>
        <dbReference type="ChEBI" id="CHEBI:246422"/>
        <note>ligand shared between dimeric partners</note>
    </ligand>
</feature>
<feature type="binding site" evidence="1">
    <location>
        <position position="265"/>
    </location>
    <ligand>
        <name>(6R)-5,10-methylene-5,6,7,8-tetrahydrofolate</name>
        <dbReference type="ChEBI" id="CHEBI:15636"/>
    </ligand>
</feature>
<protein>
    <recommendedName>
        <fullName evidence="1">Thymidylate synthase</fullName>
        <shortName evidence="1">TS</shortName>
        <shortName evidence="1">TSase</shortName>
        <ecNumber evidence="1">2.1.1.45</ecNumber>
    </recommendedName>
</protein>
<dbReference type="EC" id="2.1.1.45" evidence="1"/>
<dbReference type="EMBL" id="CP001357">
    <property type="protein sequence ID" value="ACN82671.1"/>
    <property type="molecule type" value="Genomic_DNA"/>
</dbReference>
<dbReference type="RefSeq" id="WP_012669724.1">
    <property type="nucleotide sequence ID" value="NC_012225.1"/>
</dbReference>
<dbReference type="SMR" id="C0QWM9"/>
<dbReference type="STRING" id="565034.BHWA1_00171"/>
<dbReference type="GeneID" id="63963964"/>
<dbReference type="KEGG" id="bhy:BHWA1_00171"/>
<dbReference type="eggNOG" id="COG0207">
    <property type="taxonomic scope" value="Bacteria"/>
</dbReference>
<dbReference type="HOGENOM" id="CLU_021669_0_0_12"/>
<dbReference type="UniPathway" id="UPA00575"/>
<dbReference type="Proteomes" id="UP000001803">
    <property type="component" value="Chromosome"/>
</dbReference>
<dbReference type="GO" id="GO:0005829">
    <property type="term" value="C:cytosol"/>
    <property type="evidence" value="ECO:0007669"/>
    <property type="project" value="TreeGrafter"/>
</dbReference>
<dbReference type="GO" id="GO:0004799">
    <property type="term" value="F:thymidylate synthase activity"/>
    <property type="evidence" value="ECO:0007669"/>
    <property type="project" value="UniProtKB-UniRule"/>
</dbReference>
<dbReference type="GO" id="GO:0006231">
    <property type="term" value="P:dTMP biosynthetic process"/>
    <property type="evidence" value="ECO:0007669"/>
    <property type="project" value="UniProtKB-UniRule"/>
</dbReference>
<dbReference type="GO" id="GO:0006235">
    <property type="term" value="P:dTTP biosynthetic process"/>
    <property type="evidence" value="ECO:0007669"/>
    <property type="project" value="UniProtKB-UniRule"/>
</dbReference>
<dbReference type="GO" id="GO:0032259">
    <property type="term" value="P:methylation"/>
    <property type="evidence" value="ECO:0007669"/>
    <property type="project" value="UniProtKB-KW"/>
</dbReference>
<dbReference type="CDD" id="cd00351">
    <property type="entry name" value="TS_Pyrimidine_HMase"/>
    <property type="match status" value="1"/>
</dbReference>
<dbReference type="Gene3D" id="3.30.572.10">
    <property type="entry name" value="Thymidylate synthase/dCMP hydroxymethylase domain"/>
    <property type="match status" value="1"/>
</dbReference>
<dbReference type="HAMAP" id="MF_00008">
    <property type="entry name" value="Thymidy_synth_bact"/>
    <property type="match status" value="1"/>
</dbReference>
<dbReference type="InterPro" id="IPR045097">
    <property type="entry name" value="Thymidate_synth/dCMP_Mease"/>
</dbReference>
<dbReference type="InterPro" id="IPR023451">
    <property type="entry name" value="Thymidate_synth/dCMP_Mease_dom"/>
</dbReference>
<dbReference type="InterPro" id="IPR036926">
    <property type="entry name" value="Thymidate_synth/dCMP_Mease_sf"/>
</dbReference>
<dbReference type="InterPro" id="IPR000398">
    <property type="entry name" value="Thymidylate_synthase"/>
</dbReference>
<dbReference type="InterPro" id="IPR020940">
    <property type="entry name" value="Thymidylate_synthase_AS"/>
</dbReference>
<dbReference type="NCBIfam" id="NF002497">
    <property type="entry name" value="PRK01827.1-3"/>
    <property type="match status" value="1"/>
</dbReference>
<dbReference type="NCBIfam" id="TIGR03284">
    <property type="entry name" value="thym_sym"/>
    <property type="match status" value="1"/>
</dbReference>
<dbReference type="PANTHER" id="PTHR11548:SF9">
    <property type="entry name" value="THYMIDYLATE SYNTHASE"/>
    <property type="match status" value="1"/>
</dbReference>
<dbReference type="PANTHER" id="PTHR11548">
    <property type="entry name" value="THYMIDYLATE SYNTHASE 1"/>
    <property type="match status" value="1"/>
</dbReference>
<dbReference type="Pfam" id="PF00303">
    <property type="entry name" value="Thymidylat_synt"/>
    <property type="match status" value="1"/>
</dbReference>
<dbReference type="PRINTS" id="PR00108">
    <property type="entry name" value="THYMDSNTHASE"/>
</dbReference>
<dbReference type="SUPFAM" id="SSF55831">
    <property type="entry name" value="Thymidylate synthase/dCMP hydroxymethylase"/>
    <property type="match status" value="1"/>
</dbReference>
<dbReference type="PROSITE" id="PS00091">
    <property type="entry name" value="THYMIDYLATE_SYNTHASE"/>
    <property type="match status" value="1"/>
</dbReference>
<comment type="function">
    <text evidence="1">Catalyzes the reductive methylation of 2'-deoxyuridine-5'-monophosphate (dUMP) to 2'-deoxythymidine-5'-monophosphate (dTMP) while utilizing 5,10-methylenetetrahydrofolate (mTHF) as the methyl donor and reductant in the reaction, yielding dihydrofolate (DHF) as a by-product. This enzymatic reaction provides an intracellular de novo source of dTMP, an essential precursor for DNA biosynthesis.</text>
</comment>
<comment type="catalytic activity">
    <reaction evidence="1">
        <text>dUMP + (6R)-5,10-methylene-5,6,7,8-tetrahydrofolate = 7,8-dihydrofolate + dTMP</text>
        <dbReference type="Rhea" id="RHEA:12104"/>
        <dbReference type="ChEBI" id="CHEBI:15636"/>
        <dbReference type="ChEBI" id="CHEBI:57451"/>
        <dbReference type="ChEBI" id="CHEBI:63528"/>
        <dbReference type="ChEBI" id="CHEBI:246422"/>
        <dbReference type="EC" id="2.1.1.45"/>
    </reaction>
</comment>
<comment type="pathway">
    <text evidence="1">Pyrimidine metabolism; dTTP biosynthesis.</text>
</comment>
<comment type="subunit">
    <text evidence="1">Homodimer.</text>
</comment>
<comment type="subcellular location">
    <subcellularLocation>
        <location evidence="1">Cytoplasm</location>
    </subcellularLocation>
</comment>
<comment type="similarity">
    <text evidence="1">Belongs to the thymidylate synthase family. Bacterial-type ThyA subfamily.</text>
</comment>
<name>TYSY_BRAHW</name>
<keyword id="KW-0963">Cytoplasm</keyword>
<keyword id="KW-0489">Methyltransferase</keyword>
<keyword id="KW-0545">Nucleotide biosynthesis</keyword>
<keyword id="KW-0808">Transferase</keyword>
<sequence length="266" mass="30799">MQNYLDLLKKVLEEGEETKDRTGVGTRRIFGPQLRFKFEGNKIPIITTKRVFMKGVIIELLWFLQGSTNIKFLLENNVHIWDEWADDMGELGPVYGKQWRAWETKEGNKIDQISNIVNTLRNNPASRRIILNAWNVGEIDQMHLPPCHMMCQFSVNSKGGIITHLYQRSADLFLGVPFNISSYAILTRLLAMHSGLHASELIMTFGDAHIYNNHIEQVKLQLSREPLEQTTELFIDNRPNIFSHVYEDFKLEGYKYYPTIKAEVAV</sequence>
<accession>C0QWM9</accession>
<gene>
    <name evidence="1" type="primary">thyA</name>
    <name type="ordered locus">BHWA1_00171</name>
</gene>
<reference key="1">
    <citation type="journal article" date="2009" name="PLoS ONE">
        <title>Genome sequence of the pathogenic intestinal spirochete Brachyspira hyodysenteriae reveals adaptations to its lifestyle in the porcine large intestine.</title>
        <authorList>
            <person name="Bellgard M.I."/>
            <person name="Wanchanthuek P."/>
            <person name="La T."/>
            <person name="Ryan K."/>
            <person name="Moolhuijzen P."/>
            <person name="Albertyn Z."/>
            <person name="Shaban B."/>
            <person name="Motro Y."/>
            <person name="Dunn D.S."/>
            <person name="Schibeci D."/>
            <person name="Hunter A."/>
            <person name="Barrero R."/>
            <person name="Phillips N.D."/>
            <person name="Hampson D.J."/>
        </authorList>
    </citation>
    <scope>NUCLEOTIDE SEQUENCE [LARGE SCALE GENOMIC DNA]</scope>
    <source>
        <strain>ATCC 49526 / WA1</strain>
    </source>
</reference>